<reference key="1">
    <citation type="submission" date="2007-02" db="EMBL/GenBank/DDBJ databases">
        <authorList>
            <consortium name="NIH - Mammalian Gene Collection (MGC) project"/>
        </authorList>
    </citation>
    <scope>NUCLEOTIDE SEQUENCE [LARGE SCALE MRNA]</scope>
    <source>
        <strain>Hereford</strain>
        <tissue>Hippocampus</tissue>
    </source>
</reference>
<feature type="chain" id="PRO_0000342518" description="Coatomer subunit gamma-2">
    <location>
        <begin position="1"/>
        <end position="871"/>
    </location>
</feature>
<feature type="repeat" description="HEAT 1">
    <location>
        <begin position="64"/>
        <end position="101"/>
    </location>
</feature>
<feature type="repeat" description="HEAT 2">
    <location>
        <begin position="283"/>
        <end position="320"/>
    </location>
</feature>
<feature type="repeat" description="HEAT 3">
    <location>
        <begin position="321"/>
        <end position="355"/>
    </location>
</feature>
<feature type="repeat" description="HEAT 4">
    <location>
        <begin position="356"/>
        <end position="392"/>
    </location>
</feature>
<feature type="repeat" description="HEAT 5">
    <location>
        <begin position="395"/>
        <end position="430"/>
    </location>
</feature>
<feature type="repeat" description="HEAT 6">
    <location>
        <begin position="467"/>
        <end position="504"/>
    </location>
</feature>
<feature type="region of interest" description="Disordered" evidence="4">
    <location>
        <begin position="1"/>
        <end position="20"/>
    </location>
</feature>
<feature type="compositionally biased region" description="Basic and acidic residues" evidence="4">
    <location>
        <begin position="1"/>
        <end position="11"/>
    </location>
</feature>
<feature type="modified residue" description="Phosphothreonine" evidence="3">
    <location>
        <position position="594"/>
    </location>
</feature>
<sequence>MIKKFDKKDEESGSGSNPFRHLEKSAVLQEARIFNETPINPRRCLHILTKILYLLNQGEHFGTTEATEAFFAMTRLFQSNDQTLRRMCYLTIKEMATISEDVIIVTSSLTKDMTGKEDVYRGPAIRALCRITDGTMLQAIERYMKQAIVDKVSSVSSSALVSSLHMMKISYDVVKRWVNEAQEAASSDNIMVQYHALGVLYHLKKNDRLAVSKMLNKFTKSGLKSQFAYCMLIRIASRLLKENEEGHESPVFDFIESCLRNKHEMVIYEAASAIIHLPNCTARELAPAVSVLQLFCSSPKPALRYAAVRTLNKVAMKHPSAVTACNLDLENLITDSNRSIATLAITTLLKTGSESSVDRLMKQISSFVSEISDEFKVVVVQAISALCQKYPRKHSVMMTFLSNMLRDDGGFEYKRAIVDCIIHIVEENPESKEAGLAHLCEFIEDCEHTVLATKILHLLGKEGPRTPVPSKYIRFIFNRVVLENEAVRAAAVSALAKFGAQNENLLPSILVLLQRCMMDTDDEVRDRATFYLNVLQQRQMALNATYIFNGLTVSVPGMEKALHQYTLEPSEKPFDMKSIPLATAPVFEQKAEITLVSTKPEKLAPSRQDIFQEQLAAIPEFMNLGPLFKSSEPVQLTEAETEYFVRCVKHMFTNHIVFQFDCTNTLNDQLLEKVTVQVEPSEAYEVLCCVPAPSLPYNQPGVCYTLVRLPEDDSIAAAGTFSCTMKFTVRDCDPDTGVPTEEGYDDEYVLEDLEVTVSDHIQKVMKPNFAAAWEEVGNTFEKEETFALSSTKTLEEAVNNIITFLGMQPCERSDKVPENKNSHSLYLAGVYRGGYDLLVRSRLALADGVTMQVTVRSKEGTPVDVILASVG</sequence>
<accession>A2VE21</accession>
<dbReference type="EMBL" id="BC133529">
    <property type="protein sequence ID" value="AAI33530.1"/>
    <property type="molecule type" value="mRNA"/>
</dbReference>
<dbReference type="RefSeq" id="NP_001075917.1">
    <property type="nucleotide sequence ID" value="NM_001082448.1"/>
</dbReference>
<dbReference type="SMR" id="A2VE21"/>
<dbReference type="FunCoup" id="A2VE21">
    <property type="interactions" value="4984"/>
</dbReference>
<dbReference type="STRING" id="9913.ENSBTAP00000022911"/>
<dbReference type="PaxDb" id="9913-ENSBTAP00000022911"/>
<dbReference type="PeptideAtlas" id="A2VE21"/>
<dbReference type="Ensembl" id="ENSBTAT00000022911.5">
    <property type="protein sequence ID" value="ENSBTAP00000022911.4"/>
    <property type="gene ID" value="ENSBTAG00000017245.6"/>
</dbReference>
<dbReference type="GeneID" id="536616"/>
<dbReference type="KEGG" id="bta:536616"/>
<dbReference type="CTD" id="26958"/>
<dbReference type="VEuPathDB" id="HostDB:ENSBTAG00000017245"/>
<dbReference type="VGNC" id="VGNC:27597">
    <property type="gene designation" value="COPG2"/>
</dbReference>
<dbReference type="eggNOG" id="KOG1078">
    <property type="taxonomic scope" value="Eukaryota"/>
</dbReference>
<dbReference type="GeneTree" id="ENSGT00390000016313"/>
<dbReference type="HOGENOM" id="CLU_010353_2_0_1"/>
<dbReference type="InParanoid" id="A2VE21"/>
<dbReference type="OMA" id="DFIEDCE"/>
<dbReference type="OrthoDB" id="1074925at2759"/>
<dbReference type="TreeFam" id="TF300324"/>
<dbReference type="Reactome" id="R-BTA-6807878">
    <property type="pathway name" value="COPI-mediated anterograde transport"/>
</dbReference>
<dbReference type="Reactome" id="R-BTA-6811434">
    <property type="pathway name" value="COPI-dependent Golgi-to-ER retrograde traffic"/>
</dbReference>
<dbReference type="Proteomes" id="UP000009136">
    <property type="component" value="Chromosome 4"/>
</dbReference>
<dbReference type="Bgee" id="ENSBTAG00000017245">
    <property type="expression patterns" value="Expressed in spermatocyte and 110 other cell types or tissues"/>
</dbReference>
<dbReference type="GO" id="GO:0030126">
    <property type="term" value="C:COPI vesicle coat"/>
    <property type="evidence" value="ECO:0000318"/>
    <property type="project" value="GO_Central"/>
</dbReference>
<dbReference type="GO" id="GO:0005829">
    <property type="term" value="C:cytosol"/>
    <property type="evidence" value="ECO:0007669"/>
    <property type="project" value="UniProtKB-SubCell"/>
</dbReference>
<dbReference type="GO" id="GO:0005783">
    <property type="term" value="C:endoplasmic reticulum"/>
    <property type="evidence" value="ECO:0000318"/>
    <property type="project" value="GO_Central"/>
</dbReference>
<dbReference type="GO" id="GO:0005793">
    <property type="term" value="C:endoplasmic reticulum-Golgi intermediate compartment"/>
    <property type="evidence" value="ECO:0000318"/>
    <property type="project" value="GO_Central"/>
</dbReference>
<dbReference type="GO" id="GO:0000139">
    <property type="term" value="C:Golgi membrane"/>
    <property type="evidence" value="ECO:0000318"/>
    <property type="project" value="GO_Central"/>
</dbReference>
<dbReference type="GO" id="GO:0030426">
    <property type="term" value="C:growth cone"/>
    <property type="evidence" value="ECO:0007669"/>
    <property type="project" value="Ensembl"/>
</dbReference>
<dbReference type="GO" id="GO:0005198">
    <property type="term" value="F:structural molecule activity"/>
    <property type="evidence" value="ECO:0007669"/>
    <property type="project" value="InterPro"/>
</dbReference>
<dbReference type="GO" id="GO:0006888">
    <property type="term" value="P:endoplasmic reticulum to Golgi vesicle-mediated transport"/>
    <property type="evidence" value="ECO:0000318"/>
    <property type="project" value="GO_Central"/>
</dbReference>
<dbReference type="GO" id="GO:0006891">
    <property type="term" value="P:intra-Golgi vesicle-mediated transport"/>
    <property type="evidence" value="ECO:0000318"/>
    <property type="project" value="GO_Central"/>
</dbReference>
<dbReference type="GO" id="GO:0006886">
    <property type="term" value="P:intracellular protein transport"/>
    <property type="evidence" value="ECO:0007669"/>
    <property type="project" value="InterPro"/>
</dbReference>
<dbReference type="GO" id="GO:0072384">
    <property type="term" value="P:organelle transport along microtubule"/>
    <property type="evidence" value="ECO:0000318"/>
    <property type="project" value="GO_Central"/>
</dbReference>
<dbReference type="GO" id="GO:0009306">
    <property type="term" value="P:protein secretion"/>
    <property type="evidence" value="ECO:0000318"/>
    <property type="project" value="GO_Central"/>
</dbReference>
<dbReference type="FunFam" id="1.25.10.10:FF:000038">
    <property type="entry name" value="Coatomer subunit gamma"/>
    <property type="match status" value="1"/>
</dbReference>
<dbReference type="FunFam" id="1.25.10.10:FF:000071">
    <property type="entry name" value="Coatomer subunit gamma"/>
    <property type="match status" value="1"/>
</dbReference>
<dbReference type="FunFam" id="2.60.40.1480:FF:000001">
    <property type="entry name" value="Coatomer subunit gamma"/>
    <property type="match status" value="1"/>
</dbReference>
<dbReference type="FunFam" id="3.30.310.10:FF:000006">
    <property type="entry name" value="Coatomer subunit gamma"/>
    <property type="match status" value="1"/>
</dbReference>
<dbReference type="Gene3D" id="2.60.40.1480">
    <property type="entry name" value="Coatomer, gamma subunit, appendage domain"/>
    <property type="match status" value="1"/>
</dbReference>
<dbReference type="Gene3D" id="1.25.10.10">
    <property type="entry name" value="Leucine-rich Repeat Variant"/>
    <property type="match status" value="2"/>
</dbReference>
<dbReference type="Gene3D" id="3.30.310.10">
    <property type="entry name" value="TATA-Binding Protein"/>
    <property type="match status" value="1"/>
</dbReference>
<dbReference type="InterPro" id="IPR011989">
    <property type="entry name" value="ARM-like"/>
</dbReference>
<dbReference type="InterPro" id="IPR016024">
    <property type="entry name" value="ARM-type_fold"/>
</dbReference>
<dbReference type="InterPro" id="IPR002553">
    <property type="entry name" value="Clathrin/coatomer_adapt-like_N"/>
</dbReference>
<dbReference type="InterPro" id="IPR013041">
    <property type="entry name" value="Clathrin_app_Ig-like_sf"/>
</dbReference>
<dbReference type="InterPro" id="IPR009028">
    <property type="entry name" value="Coatomer/calthrin_app_sub_C"/>
</dbReference>
<dbReference type="InterPro" id="IPR032154">
    <property type="entry name" value="Coatomer_g_Cpla"/>
</dbReference>
<dbReference type="InterPro" id="IPR017106">
    <property type="entry name" value="Coatomer_gsu"/>
</dbReference>
<dbReference type="InterPro" id="IPR013040">
    <property type="entry name" value="Coatomer_gsu_app_Ig-like_dom"/>
</dbReference>
<dbReference type="InterPro" id="IPR037067">
    <property type="entry name" value="Coatomer_gsu_app_sf"/>
</dbReference>
<dbReference type="InterPro" id="IPR012295">
    <property type="entry name" value="TBP_dom_sf"/>
</dbReference>
<dbReference type="PANTHER" id="PTHR10261">
    <property type="entry name" value="COATOMER SUBUNIT GAMMA"/>
    <property type="match status" value="1"/>
</dbReference>
<dbReference type="PANTHER" id="PTHR10261:SF4">
    <property type="entry name" value="COATOMER SUBUNIT GAMMA-2"/>
    <property type="match status" value="1"/>
</dbReference>
<dbReference type="Pfam" id="PF01602">
    <property type="entry name" value="Adaptin_N"/>
    <property type="match status" value="1"/>
</dbReference>
<dbReference type="Pfam" id="PF16381">
    <property type="entry name" value="Coatomer_g_Cpla"/>
    <property type="match status" value="1"/>
</dbReference>
<dbReference type="Pfam" id="PF08752">
    <property type="entry name" value="COP-gamma_platf"/>
    <property type="match status" value="1"/>
</dbReference>
<dbReference type="PIRSF" id="PIRSF037093">
    <property type="entry name" value="Coatomer_gamma_subunit"/>
    <property type="match status" value="1"/>
</dbReference>
<dbReference type="SUPFAM" id="SSF48371">
    <property type="entry name" value="ARM repeat"/>
    <property type="match status" value="1"/>
</dbReference>
<dbReference type="SUPFAM" id="SSF49348">
    <property type="entry name" value="Clathrin adaptor appendage domain"/>
    <property type="match status" value="1"/>
</dbReference>
<dbReference type="SUPFAM" id="SSF55711">
    <property type="entry name" value="Subdomain of clathrin and coatomer appendage domain"/>
    <property type="match status" value="1"/>
</dbReference>
<gene>
    <name type="primary">COPG2</name>
</gene>
<comment type="function">
    <text evidence="1">The coatomer is a cytosolic protein complex that binds to dilysine motifs and reversibly associates with Golgi non-clathrin-coated vesicles, which further mediate biosynthetic protein transport from the ER, via the Golgi up to the trans Golgi network. Coatomer complex is required for budding from Golgi membranes, and is essential for the retrograde Golgi-to-ER transport of dilysine-tagged proteins. In mammals, the coatomer can only be recruited by membranes associated to ADP-ribosylation factors (ARFs), which are small GTP-binding proteins; the complex also influences the Golgi structural integrity, as well as the processing, activity, and endocytic recycling of LDL receptors (By similarity).</text>
</comment>
<comment type="subunit">
    <text evidence="2">Oligomeric complex. Binds to CDC42. Interacts with JAGN1. Interacts with TMED10 (via cytoplasmic domain).</text>
</comment>
<comment type="subcellular location">
    <subcellularLocation>
        <location evidence="1">Cytoplasm</location>
        <location evidence="1">Cytosol</location>
    </subcellularLocation>
    <subcellularLocation>
        <location evidence="1">Golgi apparatus membrane</location>
        <topology evidence="1">Peripheral membrane protein</topology>
        <orientation evidence="1">Cytoplasmic side</orientation>
    </subcellularLocation>
    <subcellularLocation>
        <location evidence="1">Cytoplasmic vesicle</location>
        <location evidence="1">COPI-coated vesicle membrane</location>
        <topology evidence="1">Peripheral membrane protein</topology>
        <orientation evidence="1">Cytoplasmic side</orientation>
    </subcellularLocation>
    <text evidence="1">The coatomer is cytoplasmic or polymerized on the cytoplasmic side of the Golgi, as well as on the vesicles/buds originating from it. Tends to be more abundant in the trans-Golgi network compared to the cis-Golgi.</text>
</comment>
<comment type="similarity">
    <text evidence="5">Belongs to the COPG family.</text>
</comment>
<name>COPG2_BOVIN</name>
<proteinExistence type="evidence at transcript level"/>
<keyword id="KW-0963">Cytoplasm</keyword>
<keyword id="KW-0968">Cytoplasmic vesicle</keyword>
<keyword id="KW-0931">ER-Golgi transport</keyword>
<keyword id="KW-0333">Golgi apparatus</keyword>
<keyword id="KW-0472">Membrane</keyword>
<keyword id="KW-0597">Phosphoprotein</keyword>
<keyword id="KW-0653">Protein transport</keyword>
<keyword id="KW-1185">Reference proteome</keyword>
<keyword id="KW-0677">Repeat</keyword>
<keyword id="KW-0813">Transport</keyword>
<protein>
    <recommendedName>
        <fullName>Coatomer subunit gamma-2</fullName>
    </recommendedName>
    <alternativeName>
        <fullName>Gamma-2-coat protein</fullName>
        <shortName>Gamma-2-COP</shortName>
    </alternativeName>
</protein>
<evidence type="ECO:0000250" key="1"/>
<evidence type="ECO:0000250" key="2">
    <source>
        <dbReference type="UniProtKB" id="Q9UBF2"/>
    </source>
</evidence>
<evidence type="ECO:0000250" key="3">
    <source>
        <dbReference type="UniProtKB" id="Q9Y678"/>
    </source>
</evidence>
<evidence type="ECO:0000256" key="4">
    <source>
        <dbReference type="SAM" id="MobiDB-lite"/>
    </source>
</evidence>
<evidence type="ECO:0000305" key="5"/>
<organism>
    <name type="scientific">Bos taurus</name>
    <name type="common">Bovine</name>
    <dbReference type="NCBI Taxonomy" id="9913"/>
    <lineage>
        <taxon>Eukaryota</taxon>
        <taxon>Metazoa</taxon>
        <taxon>Chordata</taxon>
        <taxon>Craniata</taxon>
        <taxon>Vertebrata</taxon>
        <taxon>Euteleostomi</taxon>
        <taxon>Mammalia</taxon>
        <taxon>Eutheria</taxon>
        <taxon>Laurasiatheria</taxon>
        <taxon>Artiodactyla</taxon>
        <taxon>Ruminantia</taxon>
        <taxon>Pecora</taxon>
        <taxon>Bovidae</taxon>
        <taxon>Bovinae</taxon>
        <taxon>Bos</taxon>
    </lineage>
</organism>